<organism>
    <name type="scientific">Chlorobium limicola (strain DSM 245 / NBRC 103803 / 6330)</name>
    <dbReference type="NCBI Taxonomy" id="290315"/>
    <lineage>
        <taxon>Bacteria</taxon>
        <taxon>Pseudomonadati</taxon>
        <taxon>Chlorobiota</taxon>
        <taxon>Chlorobiia</taxon>
        <taxon>Chlorobiales</taxon>
        <taxon>Chlorobiaceae</taxon>
        <taxon>Chlorobium/Pelodictyon group</taxon>
        <taxon>Chlorobium</taxon>
    </lineage>
</organism>
<evidence type="ECO:0000255" key="1">
    <source>
        <dbReference type="HAMAP-Rule" id="MF_00823"/>
    </source>
</evidence>
<evidence type="ECO:0000255" key="2">
    <source>
        <dbReference type="PROSITE-ProRule" id="PRU01137"/>
    </source>
</evidence>
<reference key="1">
    <citation type="submission" date="2008-05" db="EMBL/GenBank/DDBJ databases">
        <title>Complete sequence of Chlorobium limicola DSM 245.</title>
        <authorList>
            <consortium name="US DOE Joint Genome Institute"/>
            <person name="Lucas S."/>
            <person name="Copeland A."/>
            <person name="Lapidus A."/>
            <person name="Glavina del Rio T."/>
            <person name="Dalin E."/>
            <person name="Tice H."/>
            <person name="Bruce D."/>
            <person name="Goodwin L."/>
            <person name="Pitluck S."/>
            <person name="Schmutz J."/>
            <person name="Larimer F."/>
            <person name="Land M."/>
            <person name="Hauser L."/>
            <person name="Kyrpides N."/>
            <person name="Ovchinnikova G."/>
            <person name="Zhao F."/>
            <person name="Li T."/>
            <person name="Liu Z."/>
            <person name="Overmann J."/>
            <person name="Bryant D.A."/>
            <person name="Richardson P."/>
        </authorList>
    </citation>
    <scope>NUCLEOTIDE SEQUENCE [LARGE SCALE GENOMIC DNA]</scope>
    <source>
        <strain>DSM 245 / NBRC 103803 / 6330</strain>
    </source>
</reference>
<accession>B3EER8</accession>
<sequence>MAGKVILDFEKPLFELEAKLEEMRVCLRGSAREQDQQDADMLHRDIALLEQKVDALRRSIYKNLTRWQKVQLARHPERPYTLDYIYMMTRDFVELSGDRHFKDDKAIVGGFARLEESASGFSQTVMMIGHQKGRDTKSNLYRNFGMAQPEGYRKALRLMKLAEKFRKPVITLIDTPGAFPGIEAEERGQAEAIARNLFEMARLSVPIICVIIGEGASGGAIGIGVGDRVFMAENSWYSVISPESCSSILWRSWNYKEQAAEALKLTADDLLRQGIIDRIVPEPLGGAHTEPEAMAGTLKEMLVEELRDLMSKESDVLVRERVDKFSGMGVWDE</sequence>
<protein>
    <recommendedName>
        <fullName evidence="1">Acetyl-coenzyme A carboxylase carboxyl transferase subunit alpha</fullName>
        <shortName evidence="1">ACCase subunit alpha</shortName>
        <shortName evidence="1">Acetyl-CoA carboxylase carboxyltransferase subunit alpha</shortName>
        <ecNumber evidence="1">2.1.3.15</ecNumber>
    </recommendedName>
</protein>
<dbReference type="EC" id="2.1.3.15" evidence="1"/>
<dbReference type="EMBL" id="CP001097">
    <property type="protein sequence ID" value="ACD89301.1"/>
    <property type="molecule type" value="Genomic_DNA"/>
</dbReference>
<dbReference type="RefSeq" id="WP_012465182.1">
    <property type="nucleotide sequence ID" value="NC_010803.1"/>
</dbReference>
<dbReference type="SMR" id="B3EER8"/>
<dbReference type="STRING" id="290315.Clim_0202"/>
<dbReference type="KEGG" id="cli:Clim_0202"/>
<dbReference type="eggNOG" id="COG0825">
    <property type="taxonomic scope" value="Bacteria"/>
</dbReference>
<dbReference type="HOGENOM" id="CLU_015486_0_2_10"/>
<dbReference type="OrthoDB" id="9808023at2"/>
<dbReference type="UniPathway" id="UPA00655">
    <property type="reaction ID" value="UER00711"/>
</dbReference>
<dbReference type="Proteomes" id="UP000008841">
    <property type="component" value="Chromosome"/>
</dbReference>
<dbReference type="GO" id="GO:0009317">
    <property type="term" value="C:acetyl-CoA carboxylase complex"/>
    <property type="evidence" value="ECO:0007669"/>
    <property type="project" value="InterPro"/>
</dbReference>
<dbReference type="GO" id="GO:0003989">
    <property type="term" value="F:acetyl-CoA carboxylase activity"/>
    <property type="evidence" value="ECO:0007669"/>
    <property type="project" value="InterPro"/>
</dbReference>
<dbReference type="GO" id="GO:0005524">
    <property type="term" value="F:ATP binding"/>
    <property type="evidence" value="ECO:0007669"/>
    <property type="project" value="UniProtKB-KW"/>
</dbReference>
<dbReference type="GO" id="GO:0016743">
    <property type="term" value="F:carboxyl- or carbamoyltransferase activity"/>
    <property type="evidence" value="ECO:0007669"/>
    <property type="project" value="UniProtKB-UniRule"/>
</dbReference>
<dbReference type="GO" id="GO:0006633">
    <property type="term" value="P:fatty acid biosynthetic process"/>
    <property type="evidence" value="ECO:0007669"/>
    <property type="project" value="UniProtKB-KW"/>
</dbReference>
<dbReference type="GO" id="GO:2001295">
    <property type="term" value="P:malonyl-CoA biosynthetic process"/>
    <property type="evidence" value="ECO:0007669"/>
    <property type="project" value="UniProtKB-UniRule"/>
</dbReference>
<dbReference type="Gene3D" id="3.90.226.10">
    <property type="entry name" value="2-enoyl-CoA Hydratase, Chain A, domain 1"/>
    <property type="match status" value="1"/>
</dbReference>
<dbReference type="HAMAP" id="MF_00823">
    <property type="entry name" value="AcetylCoA_CT_alpha"/>
    <property type="match status" value="1"/>
</dbReference>
<dbReference type="InterPro" id="IPR001095">
    <property type="entry name" value="Acetyl_CoA_COase_a_su"/>
</dbReference>
<dbReference type="InterPro" id="IPR029045">
    <property type="entry name" value="ClpP/crotonase-like_dom_sf"/>
</dbReference>
<dbReference type="InterPro" id="IPR011763">
    <property type="entry name" value="COA_CT_C"/>
</dbReference>
<dbReference type="NCBIfam" id="TIGR00513">
    <property type="entry name" value="accA"/>
    <property type="match status" value="1"/>
</dbReference>
<dbReference type="NCBIfam" id="NF041504">
    <property type="entry name" value="AccA_sub"/>
    <property type="match status" value="1"/>
</dbReference>
<dbReference type="NCBIfam" id="NF004344">
    <property type="entry name" value="PRK05724.1"/>
    <property type="match status" value="1"/>
</dbReference>
<dbReference type="PANTHER" id="PTHR42853">
    <property type="entry name" value="ACETYL-COENZYME A CARBOXYLASE CARBOXYL TRANSFERASE SUBUNIT ALPHA"/>
    <property type="match status" value="1"/>
</dbReference>
<dbReference type="PANTHER" id="PTHR42853:SF3">
    <property type="entry name" value="ACETYL-COENZYME A CARBOXYLASE CARBOXYL TRANSFERASE SUBUNIT ALPHA, CHLOROPLASTIC"/>
    <property type="match status" value="1"/>
</dbReference>
<dbReference type="Pfam" id="PF03255">
    <property type="entry name" value="ACCA"/>
    <property type="match status" value="1"/>
</dbReference>
<dbReference type="PRINTS" id="PR01069">
    <property type="entry name" value="ACCCTRFRASEA"/>
</dbReference>
<dbReference type="SUPFAM" id="SSF52096">
    <property type="entry name" value="ClpP/crotonase"/>
    <property type="match status" value="1"/>
</dbReference>
<dbReference type="PROSITE" id="PS50989">
    <property type="entry name" value="COA_CT_CTER"/>
    <property type="match status" value="1"/>
</dbReference>
<gene>
    <name evidence="1" type="primary">accA</name>
    <name type="ordered locus">Clim_0202</name>
</gene>
<keyword id="KW-0067">ATP-binding</keyword>
<keyword id="KW-0963">Cytoplasm</keyword>
<keyword id="KW-0275">Fatty acid biosynthesis</keyword>
<keyword id="KW-0276">Fatty acid metabolism</keyword>
<keyword id="KW-0444">Lipid biosynthesis</keyword>
<keyword id="KW-0443">Lipid metabolism</keyword>
<keyword id="KW-0547">Nucleotide-binding</keyword>
<keyword id="KW-0808">Transferase</keyword>
<proteinExistence type="inferred from homology"/>
<comment type="function">
    <text evidence="1">Component of the acetyl coenzyme A carboxylase (ACC) complex. First, biotin carboxylase catalyzes the carboxylation of biotin on its carrier protein (BCCP) and then the CO(2) group is transferred by the carboxyltransferase to acetyl-CoA to form malonyl-CoA.</text>
</comment>
<comment type="catalytic activity">
    <reaction evidence="1">
        <text>N(6)-carboxybiotinyl-L-lysyl-[protein] + acetyl-CoA = N(6)-biotinyl-L-lysyl-[protein] + malonyl-CoA</text>
        <dbReference type="Rhea" id="RHEA:54728"/>
        <dbReference type="Rhea" id="RHEA-COMP:10505"/>
        <dbReference type="Rhea" id="RHEA-COMP:10506"/>
        <dbReference type="ChEBI" id="CHEBI:57288"/>
        <dbReference type="ChEBI" id="CHEBI:57384"/>
        <dbReference type="ChEBI" id="CHEBI:83144"/>
        <dbReference type="ChEBI" id="CHEBI:83145"/>
        <dbReference type="EC" id="2.1.3.15"/>
    </reaction>
</comment>
<comment type="pathway">
    <text evidence="1">Lipid metabolism; malonyl-CoA biosynthesis; malonyl-CoA from acetyl-CoA: step 1/1.</text>
</comment>
<comment type="subunit">
    <text evidence="1">Acetyl-CoA carboxylase is a heterohexamer composed of biotin carboxyl carrier protein (AccB), biotin carboxylase (AccC) and two subunits each of ACCase subunit alpha (AccA) and ACCase subunit beta (AccD).</text>
</comment>
<comment type="subcellular location">
    <subcellularLocation>
        <location evidence="1">Cytoplasm</location>
    </subcellularLocation>
</comment>
<comment type="similarity">
    <text evidence="1">Belongs to the AccA family.</text>
</comment>
<name>ACCA_CHLL2</name>
<feature type="chain" id="PRO_1000134469" description="Acetyl-coenzyme A carboxylase carboxyl transferase subunit alpha">
    <location>
        <begin position="1"/>
        <end position="333"/>
    </location>
</feature>
<feature type="domain" description="CoA carboxyltransferase C-terminal" evidence="2">
    <location>
        <begin position="48"/>
        <end position="308"/>
    </location>
</feature>